<dbReference type="EMBL" id="DQ317523">
    <property type="protein sequence ID" value="ABC25164.1"/>
    <property type="molecule type" value="Genomic_DNA"/>
</dbReference>
<dbReference type="EMBL" id="DQ317523">
    <property type="protein sequence ID" value="ABC25186.1"/>
    <property type="molecule type" value="Genomic_DNA"/>
</dbReference>
<dbReference type="SMR" id="Q2PMM4"/>
<dbReference type="FunCoup" id="Q2PMM4">
    <property type="interactions" value="143"/>
</dbReference>
<dbReference type="STRING" id="3847.Q2PMM4"/>
<dbReference type="EnsemblPlants" id="KRG61171">
    <property type="protein sequence ID" value="KRG61171"/>
    <property type="gene ID" value="GLYMA_U009000"/>
</dbReference>
<dbReference type="Gramene" id="KRG61171">
    <property type="protein sequence ID" value="KRG61171"/>
    <property type="gene ID" value="GLYMA_U009000"/>
</dbReference>
<dbReference type="KEGG" id="gmx:3989254"/>
<dbReference type="KEGG" id="gmx:3989338"/>
<dbReference type="InParanoid" id="Q2PMM4"/>
<dbReference type="OMA" id="VRPIMGH"/>
<dbReference type="Proteomes" id="UP000008827">
    <property type="component" value="Chloroplast"/>
</dbReference>
<dbReference type="GO" id="GO:0009507">
    <property type="term" value="C:chloroplast"/>
    <property type="evidence" value="ECO:0007669"/>
    <property type="project" value="UniProtKB-SubCell"/>
</dbReference>
<dbReference type="GO" id="GO:0022625">
    <property type="term" value="C:cytosolic large ribosomal subunit"/>
    <property type="evidence" value="ECO:0000318"/>
    <property type="project" value="GO_Central"/>
</dbReference>
<dbReference type="GO" id="GO:0003729">
    <property type="term" value="F:mRNA binding"/>
    <property type="evidence" value="ECO:0007669"/>
    <property type="project" value="UniProtKB-ARBA"/>
</dbReference>
<dbReference type="GO" id="GO:0019843">
    <property type="term" value="F:rRNA binding"/>
    <property type="evidence" value="ECO:0007669"/>
    <property type="project" value="UniProtKB-UniRule"/>
</dbReference>
<dbReference type="GO" id="GO:0003735">
    <property type="term" value="F:structural constituent of ribosome"/>
    <property type="evidence" value="ECO:0000318"/>
    <property type="project" value="GO_Central"/>
</dbReference>
<dbReference type="GO" id="GO:0006412">
    <property type="term" value="P:translation"/>
    <property type="evidence" value="ECO:0007669"/>
    <property type="project" value="UniProtKB-UniRule"/>
</dbReference>
<dbReference type="FunFam" id="3.30.70.330:FF:000002">
    <property type="entry name" value="50S ribosomal protein L23, chloroplastic"/>
    <property type="match status" value="1"/>
</dbReference>
<dbReference type="Gene3D" id="3.30.70.330">
    <property type="match status" value="1"/>
</dbReference>
<dbReference type="HAMAP" id="MF_01369_B">
    <property type="entry name" value="Ribosomal_uL23_B"/>
    <property type="match status" value="1"/>
</dbReference>
<dbReference type="InterPro" id="IPR012677">
    <property type="entry name" value="Nucleotide-bd_a/b_plait_sf"/>
</dbReference>
<dbReference type="InterPro" id="IPR013025">
    <property type="entry name" value="Ribosomal_uL23-like"/>
</dbReference>
<dbReference type="InterPro" id="IPR012678">
    <property type="entry name" value="Ribosomal_uL23/eL15/eS24_sf"/>
</dbReference>
<dbReference type="InterPro" id="IPR001014">
    <property type="entry name" value="Ribosomal_uL23_CS"/>
</dbReference>
<dbReference type="PANTHER" id="PTHR11620">
    <property type="entry name" value="60S RIBOSOMAL PROTEIN L23A"/>
    <property type="match status" value="1"/>
</dbReference>
<dbReference type="Pfam" id="PF00276">
    <property type="entry name" value="Ribosomal_L23"/>
    <property type="match status" value="1"/>
</dbReference>
<dbReference type="SUPFAM" id="SSF54189">
    <property type="entry name" value="Ribosomal proteins S24e, L23 and L15e"/>
    <property type="match status" value="1"/>
</dbReference>
<dbReference type="PROSITE" id="PS00050">
    <property type="entry name" value="RIBOSOMAL_L23"/>
    <property type="match status" value="1"/>
</dbReference>
<protein>
    <recommendedName>
        <fullName evidence="2">Large ribosomal subunit protein uL23cz/uL23cy</fullName>
    </recommendedName>
    <alternativeName>
        <fullName>50S ribosomal protein L23, chloroplastic</fullName>
    </alternativeName>
</protein>
<feature type="chain" id="PRO_0000272900" description="Large ribosomal subunit protein uL23cz/uL23cy">
    <location>
        <begin position="1"/>
        <end position="93"/>
    </location>
</feature>
<sequence length="93" mass="10931">MNGIKYAVFTDKSIRLLGKNQYTFNVESGSTRTEIKHWVELFFDVKVIAMNSHRLPVKGRRVRPIMGHTMHYRRMIITLQPGYSIPPLRKKKT</sequence>
<comment type="function">
    <text evidence="1">Binds to 23S rRNA.</text>
</comment>
<comment type="subunit">
    <text evidence="1">Part of the 50S ribosomal subunit.</text>
</comment>
<comment type="subcellular location">
    <subcellularLocation>
        <location>Plastid</location>
        <location>Chloroplast</location>
    </subcellularLocation>
</comment>
<comment type="similarity">
    <text evidence="2">Belongs to the universal ribosomal protein uL23 family.</text>
</comment>
<gene>
    <name type="primary">rpl23-A</name>
</gene>
<gene>
    <name type="primary">rpl23-B</name>
</gene>
<evidence type="ECO:0000250" key="1"/>
<evidence type="ECO:0000305" key="2"/>
<name>RK23_SOYBN</name>
<accession>Q2PMM4</accession>
<keyword id="KW-0150">Chloroplast</keyword>
<keyword id="KW-0934">Plastid</keyword>
<keyword id="KW-1185">Reference proteome</keyword>
<keyword id="KW-0687">Ribonucleoprotein</keyword>
<keyword id="KW-0689">Ribosomal protein</keyword>
<keyword id="KW-0694">RNA-binding</keyword>
<keyword id="KW-0699">rRNA-binding</keyword>
<geneLocation type="chloroplast"/>
<proteinExistence type="inferred from homology"/>
<organism>
    <name type="scientific">Glycine max</name>
    <name type="common">Soybean</name>
    <name type="synonym">Glycine hispida</name>
    <dbReference type="NCBI Taxonomy" id="3847"/>
    <lineage>
        <taxon>Eukaryota</taxon>
        <taxon>Viridiplantae</taxon>
        <taxon>Streptophyta</taxon>
        <taxon>Embryophyta</taxon>
        <taxon>Tracheophyta</taxon>
        <taxon>Spermatophyta</taxon>
        <taxon>Magnoliopsida</taxon>
        <taxon>eudicotyledons</taxon>
        <taxon>Gunneridae</taxon>
        <taxon>Pentapetalae</taxon>
        <taxon>rosids</taxon>
        <taxon>fabids</taxon>
        <taxon>Fabales</taxon>
        <taxon>Fabaceae</taxon>
        <taxon>Papilionoideae</taxon>
        <taxon>50 kb inversion clade</taxon>
        <taxon>NPAAA clade</taxon>
        <taxon>indigoferoid/millettioid clade</taxon>
        <taxon>Phaseoleae</taxon>
        <taxon>Glycine</taxon>
        <taxon>Glycine subgen. Soja</taxon>
    </lineage>
</organism>
<reference key="1">
    <citation type="journal article" date="2005" name="Plant Mol. Biol.">
        <title>Complete chloroplast genome sequence of Glycine max and comparative analyses with other legume genomes.</title>
        <authorList>
            <person name="Saski C."/>
            <person name="Lee S.-B."/>
            <person name="Daniell H."/>
            <person name="Wood T.C."/>
            <person name="Tomkins J."/>
            <person name="Kim H.-G."/>
            <person name="Jansen R.K."/>
        </authorList>
    </citation>
    <scope>NUCLEOTIDE SEQUENCE [LARGE SCALE GENOMIC DNA]</scope>
    <source>
        <strain>cv. PI 437654</strain>
    </source>
</reference>